<reference key="1">
    <citation type="journal article" date="1997" name="Biochim. Biophys. Acta">
        <title>Molecular cloning of a splice variant of Caenorhabditis elegans YNK1, a putative element in signal transduction.</title>
        <authorList>
            <person name="Che S."/>
            <person name="Weil M.M."/>
            <person name="Etkin L.D."/>
            <person name="Epstein H.F."/>
            <person name="Kuang J."/>
        </authorList>
    </citation>
    <scope>NUCLEOTIDE SEQUENCE [MRNA] (ISOFORM A)</scope>
    <scope>DEVELOPMENTAL STAGE</scope>
    <source>
        <strain>Bristol N2</strain>
    </source>
</reference>
<reference key="2">
    <citation type="journal article" date="1994" name="Nature">
        <title>2.2 Mb of contiguous nucleotide sequence from chromosome III of C. elegans.</title>
        <authorList>
            <person name="Wilson R."/>
            <person name="Ainscough R."/>
            <person name="Anderson K."/>
            <person name="Baynes C."/>
            <person name="Berks M."/>
            <person name="Bonfield J."/>
            <person name="Burton J."/>
            <person name="Connell M."/>
            <person name="Copsey T."/>
            <person name="Cooper J."/>
            <person name="Coulson A."/>
            <person name="Craxton M."/>
            <person name="Dear S."/>
            <person name="Du Z."/>
            <person name="Durbin R."/>
            <person name="Favello A."/>
            <person name="Fraser A."/>
            <person name="Fulton L."/>
            <person name="Gardner A."/>
            <person name="Green P."/>
            <person name="Hawkins T."/>
            <person name="Hillier L."/>
            <person name="Jier M."/>
            <person name="Johnston L."/>
            <person name="Jones M."/>
            <person name="Kershaw J."/>
            <person name="Kirsten J."/>
            <person name="Laisster N."/>
            <person name="Latreille P."/>
            <person name="Lightning J."/>
            <person name="Lloyd C."/>
            <person name="Mortimore B."/>
            <person name="O'Callaghan M."/>
            <person name="Parsons J."/>
            <person name="Percy C."/>
            <person name="Rifken L."/>
            <person name="Roopra A."/>
            <person name="Saunders D."/>
            <person name="Shownkeen R."/>
            <person name="Sims M."/>
            <person name="Smaldon N."/>
            <person name="Smith A."/>
            <person name="Smith M."/>
            <person name="Sonnhammer E."/>
            <person name="Staden R."/>
            <person name="Sulston J."/>
            <person name="Thierry-Mieg J."/>
            <person name="Thomas K."/>
            <person name="Vaudin M."/>
            <person name="Vaughan K."/>
            <person name="Waterston R."/>
            <person name="Watson A."/>
            <person name="Weinstock L."/>
            <person name="Wilkinson-Sproat J."/>
            <person name="Wohldman P."/>
        </authorList>
    </citation>
    <scope>NUCLEOTIDE SEQUENCE [LARGE SCALE GENOMIC DNA]</scope>
    <source>
        <strain>Bristol N2</strain>
    </source>
</reference>
<reference key="3">
    <citation type="journal article" date="1998" name="Science">
        <title>Genome sequence of the nematode C. elegans: a platform for investigating biology.</title>
        <authorList>
            <consortium name="The C. elegans sequencing consortium"/>
        </authorList>
    </citation>
    <scope>NUCLEOTIDE SEQUENCE [LARGE SCALE GENOMIC DNA]</scope>
    <scope>ALTERNATIVE SPLICING</scope>
    <source>
        <strain>Bristol N2</strain>
    </source>
</reference>
<reference key="4">
    <citation type="journal article" date="2005" name="Development">
        <title>LIN-12/Notch trafficking and regulation of DSL ligand activity during vulval induction in Caenorhabditis elegans.</title>
        <authorList>
            <person name="Shaye D.D."/>
            <person name="Greenwald I."/>
        </authorList>
    </citation>
    <scope>FUNCTION</scope>
</reference>
<accession>P34552</accession>
<accession>Q7YXC7</accession>
<accession>Q8I114</accession>
<accession>Q8I115</accession>
<accession>Q94159</accession>
<sequence>MATFGFLSAPLKSTNEVDLVKPLTSYIDNVYNTSDNNRSDVAEAVQELNKLRSKACCQPLDKHQSALDVLTRYYDQLVAIENKIIISATQNPVVFKWKDAFDKGSLFSSRASLSLSDGSFERAAVLFNIGSLMSQIGAAQQFHTDDEIKVSAKLFQQSAGVFARLRDVVLGMVQQEPTPDLMPDTLAALSALMTAQAQEAIYIKGHKDKMKATSMVKISAQVAEFYSEAQKMMSKDIVRGLWDKDWSAIVSGKNLAYQALAQYHQSEVCGEARQIGEQLSRLAESLKLFDTAQKYLPRDITGIWDIYPSVSKAHAAAKKDNDFIYHEKVSDFRTLPTLPKAVLAKPTPMQTPMTPSFRDMFAVLVPVQVHNAMQSYDARKAELVNMETVRMREATQLMNGVLASLNLPAALDDVTSTETLPESLKLKSAKLKQNGGSSEIMRLFSELPTLYQRNEDILTETSRILNEEKESDDTMRKQLGTKWTRMSSEQLTGPLVTEIGKYRGILHTASNADKMVKEKFESHRQGIELLSKNESELRSSIPGQTAHATGETDTVRQLRQFMSQWNEVTTDRELLEKELKNTNCDIANDFLKAMAENQLINEEHISKEKIAQIFGDLKRRVQSSLDTQETLMNQIQAANNTFTGEKTGSSTGAERERILKMLAQASDAYVELKANLEEGTKFYNDLTPILVRLQQKVSDFAFARQTEKEDLMRQLQLSIVSGQAAKAVVDGVNSLVSSYLTGGTNAAQSPANAPPRPPPPRPAAPSVESPIPPPRTQQSMQATPGAPPQYNPYQQQQQPQMQQFQQHPGYYQQPMPYGQPQPMFQPQYQPTFAAPYPTFPGAFPSYQQQWPQQQQQGGFPPNPQFGQQNQQQGGGGGANPFQ</sequence>
<dbReference type="EMBL" id="U73679">
    <property type="protein sequence ID" value="AAC67305.1"/>
    <property type="molecule type" value="mRNA"/>
</dbReference>
<dbReference type="EMBL" id="Z29561">
    <property type="protein sequence ID" value="CAA82667.2"/>
    <property type="molecule type" value="Genomic_DNA"/>
</dbReference>
<dbReference type="EMBL" id="Z29561">
    <property type="protein sequence ID" value="CAD54152.1"/>
    <property type="molecule type" value="Genomic_DNA"/>
</dbReference>
<dbReference type="EMBL" id="Z29561">
    <property type="protein sequence ID" value="CAD54153.1"/>
    <property type="molecule type" value="Genomic_DNA"/>
</dbReference>
<dbReference type="EMBL" id="Z29561">
    <property type="protein sequence ID" value="CAD91697.1"/>
    <property type="molecule type" value="Genomic_DNA"/>
</dbReference>
<dbReference type="PIR" id="S41034">
    <property type="entry name" value="S41034"/>
</dbReference>
<dbReference type="RefSeq" id="NP_001022713.1">
    <molecule id="P34552-1"/>
    <property type="nucleotide sequence ID" value="NM_001027542.5"/>
</dbReference>
<dbReference type="RefSeq" id="NP_001022714.1">
    <molecule id="P34552-3"/>
    <property type="nucleotide sequence ID" value="NM_001027543.4"/>
</dbReference>
<dbReference type="RefSeq" id="NP_001022715.1">
    <molecule id="P34552-4"/>
    <property type="nucleotide sequence ID" value="NM_001027544.3"/>
</dbReference>
<dbReference type="RefSeq" id="NP_499213.1">
    <molecule id="P34552-2"/>
    <property type="nucleotide sequence ID" value="NM_066812.8"/>
</dbReference>
<dbReference type="SMR" id="P34552"/>
<dbReference type="BioGRID" id="41604">
    <property type="interactions" value="43"/>
</dbReference>
<dbReference type="ELM" id="P34552"/>
<dbReference type="FunCoup" id="P34552">
    <property type="interactions" value="3349"/>
</dbReference>
<dbReference type="IntAct" id="P34552">
    <property type="interactions" value="10"/>
</dbReference>
<dbReference type="STRING" id="6239.R10E12.1b.1"/>
<dbReference type="iPTMnet" id="P34552"/>
<dbReference type="PaxDb" id="6239-R10E12.1b"/>
<dbReference type="PeptideAtlas" id="P34552"/>
<dbReference type="EnsemblMetazoa" id="R10E12.1a.1">
    <molecule id="P34552-2"/>
    <property type="protein sequence ID" value="R10E12.1a.1"/>
    <property type="gene ID" value="WBGene00007010"/>
</dbReference>
<dbReference type="EnsemblMetazoa" id="R10E12.1b.1">
    <molecule id="P34552-1"/>
    <property type="protein sequence ID" value="R10E12.1b.1"/>
    <property type="gene ID" value="WBGene00007010"/>
</dbReference>
<dbReference type="EnsemblMetazoa" id="R10E12.1c.1">
    <molecule id="P34552-3"/>
    <property type="protein sequence ID" value="R10E12.1c.1"/>
    <property type="gene ID" value="WBGene00007010"/>
</dbReference>
<dbReference type="EnsemblMetazoa" id="R10E12.1d.1">
    <molecule id="P34552-4"/>
    <property type="protein sequence ID" value="R10E12.1d.1"/>
    <property type="gene ID" value="WBGene00007010"/>
</dbReference>
<dbReference type="GeneID" id="176410"/>
<dbReference type="KEGG" id="cel:CELE_R10E12.1"/>
<dbReference type="UCSC" id="R10E12.1a">
    <molecule id="P34552-1"/>
    <property type="organism name" value="c. elegans"/>
</dbReference>
<dbReference type="AGR" id="WB:WBGene00007010"/>
<dbReference type="CTD" id="176410"/>
<dbReference type="WormBase" id="R10E12.1a">
    <molecule id="P34552-2"/>
    <property type="protein sequence ID" value="CE25075"/>
    <property type="gene ID" value="WBGene00007010"/>
    <property type="gene designation" value="alx-1"/>
</dbReference>
<dbReference type="WormBase" id="R10E12.1b">
    <molecule id="P34552-1"/>
    <property type="protein sequence ID" value="CE00310"/>
    <property type="gene ID" value="WBGene00007010"/>
    <property type="gene designation" value="alx-1"/>
</dbReference>
<dbReference type="WormBase" id="R10E12.1c">
    <molecule id="P34552-3"/>
    <property type="protein sequence ID" value="CE31853"/>
    <property type="gene ID" value="WBGene00007010"/>
    <property type="gene designation" value="alx-1"/>
</dbReference>
<dbReference type="WormBase" id="R10E12.1d">
    <molecule id="P34552-4"/>
    <property type="protein sequence ID" value="CE34084"/>
    <property type="gene ID" value="WBGene00007010"/>
    <property type="gene designation" value="alx-1"/>
</dbReference>
<dbReference type="eggNOG" id="KOG2220">
    <property type="taxonomic scope" value="Eukaryota"/>
</dbReference>
<dbReference type="GeneTree" id="ENSGT00940000163083"/>
<dbReference type="InParanoid" id="P34552"/>
<dbReference type="OMA" id="VSHAEEM"/>
<dbReference type="OrthoDB" id="2141925at2759"/>
<dbReference type="PhylomeDB" id="P34552"/>
<dbReference type="SignaLink" id="P34552"/>
<dbReference type="PRO" id="PR:P34552"/>
<dbReference type="Proteomes" id="UP000001940">
    <property type="component" value="Chromosome III"/>
</dbReference>
<dbReference type="Bgee" id="WBGene00007010">
    <property type="expression patterns" value="Expressed in pharyngeal muscle cell (C elegans) and 4 other cell types or tissues"/>
</dbReference>
<dbReference type="GO" id="GO:0016323">
    <property type="term" value="C:basolateral plasma membrane"/>
    <property type="evidence" value="ECO:0000314"/>
    <property type="project" value="WormBase"/>
</dbReference>
<dbReference type="GO" id="GO:0031410">
    <property type="term" value="C:cytoplasmic vesicle"/>
    <property type="evidence" value="ECO:0000314"/>
    <property type="project" value="WormBase"/>
</dbReference>
<dbReference type="GO" id="GO:0005768">
    <property type="term" value="C:endosome"/>
    <property type="evidence" value="ECO:0000318"/>
    <property type="project" value="GO_Central"/>
</dbReference>
<dbReference type="GO" id="GO:0005771">
    <property type="term" value="C:multivesicular body"/>
    <property type="evidence" value="ECO:0000314"/>
    <property type="project" value="WormBase"/>
</dbReference>
<dbReference type="GO" id="GO:0043226">
    <property type="term" value="C:organelle"/>
    <property type="evidence" value="ECO:0000314"/>
    <property type="project" value="WormBase"/>
</dbReference>
<dbReference type="GO" id="GO:0055037">
    <property type="term" value="C:recycling endosome"/>
    <property type="evidence" value="ECO:0000314"/>
    <property type="project" value="WormBase"/>
</dbReference>
<dbReference type="GO" id="GO:0005112">
    <property type="term" value="F:Notch binding"/>
    <property type="evidence" value="ECO:0000353"/>
    <property type="project" value="WormBase"/>
</dbReference>
<dbReference type="GO" id="GO:0032456">
    <property type="term" value="P:endocytic recycling"/>
    <property type="evidence" value="ECO:0000315"/>
    <property type="project" value="WormBase"/>
</dbReference>
<dbReference type="GO" id="GO:0007032">
    <property type="term" value="P:endosome organization"/>
    <property type="evidence" value="ECO:0000315"/>
    <property type="project" value="WormBase"/>
</dbReference>
<dbReference type="GO" id="GO:0000281">
    <property type="term" value="P:mitotic cytokinesis"/>
    <property type="evidence" value="ECO:0000318"/>
    <property type="project" value="GO_Central"/>
</dbReference>
<dbReference type="GO" id="GO:0033365">
    <property type="term" value="P:protein localization to organelle"/>
    <property type="evidence" value="ECO:0000315"/>
    <property type="project" value="WormBase"/>
</dbReference>
<dbReference type="GO" id="GO:0042176">
    <property type="term" value="P:regulation of protein catabolic process"/>
    <property type="evidence" value="ECO:0000315"/>
    <property type="project" value="WormBase"/>
</dbReference>
<dbReference type="CDD" id="cd09240">
    <property type="entry name" value="BRO1_Alix"/>
    <property type="match status" value="1"/>
</dbReference>
<dbReference type="CDD" id="cd09235">
    <property type="entry name" value="V_Alix"/>
    <property type="match status" value="1"/>
</dbReference>
<dbReference type="FunFam" id="1.25.40.280:FF:000001">
    <property type="entry name" value="programmed cell death 6-interacting protein-like isoform X1"/>
    <property type="match status" value="1"/>
</dbReference>
<dbReference type="Gene3D" id="1.20.120.560">
    <property type="entry name" value="alix/aip1 in complex with the ypdl late domain"/>
    <property type="match status" value="1"/>
</dbReference>
<dbReference type="Gene3D" id="1.20.140.50">
    <property type="entry name" value="alix/aip1 like domains"/>
    <property type="match status" value="1"/>
</dbReference>
<dbReference type="Gene3D" id="1.25.40.280">
    <property type="entry name" value="alix/aip1 like domains"/>
    <property type="match status" value="1"/>
</dbReference>
<dbReference type="InterPro" id="IPR025304">
    <property type="entry name" value="ALIX_V_dom"/>
</dbReference>
<dbReference type="InterPro" id="IPR004328">
    <property type="entry name" value="BRO1_dom"/>
</dbReference>
<dbReference type="InterPro" id="IPR038499">
    <property type="entry name" value="BRO1_sf"/>
</dbReference>
<dbReference type="PANTHER" id="PTHR23030">
    <property type="entry name" value="PCD6 INTERACTING PROTEIN-RELATED"/>
    <property type="match status" value="1"/>
</dbReference>
<dbReference type="PANTHER" id="PTHR23030:SF39">
    <property type="entry name" value="PROGRAMMED CELL DEATH 6-INTERACTING PROTEIN"/>
    <property type="match status" value="1"/>
</dbReference>
<dbReference type="Pfam" id="PF13949">
    <property type="entry name" value="ALIX_LYPXL_bnd"/>
    <property type="match status" value="1"/>
</dbReference>
<dbReference type="Pfam" id="PF03097">
    <property type="entry name" value="BRO1"/>
    <property type="match status" value="1"/>
</dbReference>
<dbReference type="SMART" id="SM01041">
    <property type="entry name" value="BRO1"/>
    <property type="match status" value="1"/>
</dbReference>
<dbReference type="PROSITE" id="PS51180">
    <property type="entry name" value="BRO1"/>
    <property type="match status" value="1"/>
</dbReference>
<proteinExistence type="evidence at transcript level"/>
<organism>
    <name type="scientific">Caenorhabditis elegans</name>
    <dbReference type="NCBI Taxonomy" id="6239"/>
    <lineage>
        <taxon>Eukaryota</taxon>
        <taxon>Metazoa</taxon>
        <taxon>Ecdysozoa</taxon>
        <taxon>Nematoda</taxon>
        <taxon>Chromadorea</taxon>
        <taxon>Rhabditida</taxon>
        <taxon>Rhabditina</taxon>
        <taxon>Rhabditomorpha</taxon>
        <taxon>Rhabditoidea</taxon>
        <taxon>Rhabditidae</taxon>
        <taxon>Peloderinae</taxon>
        <taxon>Caenorhabditis</taxon>
    </lineage>
</organism>
<gene>
    <name type="primary">alx-1</name>
    <name type="synonym">pqn-58</name>
    <name type="ORF">R10E12.1</name>
</gene>
<evidence type="ECO:0000255" key="1">
    <source>
        <dbReference type="PROSITE-ProRule" id="PRU00526"/>
    </source>
</evidence>
<evidence type="ECO:0000256" key="2">
    <source>
        <dbReference type="SAM" id="MobiDB-lite"/>
    </source>
</evidence>
<evidence type="ECO:0000269" key="3">
    <source>
    </source>
</evidence>
<evidence type="ECO:0000269" key="4">
    <source>
    </source>
</evidence>
<evidence type="ECO:0000303" key="5">
    <source>
    </source>
</evidence>
<evidence type="ECO:0000305" key="6"/>
<name>ALXA_CAEEL</name>
<protein>
    <recommendedName>
        <fullName>Apoptosis-linked gene 2-interacting protein X 1</fullName>
    </recommendedName>
    <alternativeName>
        <fullName>Prion-like-(Q/N-rich) domain-bearing protein 58</fullName>
    </alternativeName>
    <alternativeName>
        <fullName>Protein YNK1</fullName>
    </alternativeName>
</protein>
<keyword id="KW-0025">Alternative splicing</keyword>
<keyword id="KW-1185">Reference proteome</keyword>
<comment type="function">
    <text evidence="3">Required for lin-12 degradation after it has been internalised in the vulval precursor cells.</text>
</comment>
<comment type="alternative products">
    <event type="alternative splicing"/>
    <isoform>
        <id>P34552-1</id>
        <name>b</name>
        <sequence type="displayed"/>
    </isoform>
    <isoform>
        <id>P34552-2</id>
        <name>a</name>
        <sequence type="described" ref="VSP_016612"/>
    </isoform>
    <isoform>
        <id>P34552-3</id>
        <name>c</name>
        <sequence type="described" ref="VSP_016613"/>
    </isoform>
    <isoform>
        <id>P34552-4</id>
        <name>d</name>
        <sequence type="described" ref="VSP_016611"/>
    </isoform>
</comment>
<comment type="developmental stage">
    <text evidence="4">Expressed throughout development.</text>
</comment>
<feature type="chain" id="PRO_0000058559" description="Apoptosis-linked gene 2-interacting protein X 1">
    <location>
        <begin position="1"/>
        <end position="882"/>
    </location>
</feature>
<feature type="domain" description="BRO1" evidence="1">
    <location>
        <begin position="5"/>
        <end position="398"/>
    </location>
</feature>
<feature type="region of interest" description="Disordered" evidence="2">
    <location>
        <begin position="743"/>
        <end position="882"/>
    </location>
</feature>
<feature type="compositionally biased region" description="Pro residues" evidence="2">
    <location>
        <begin position="752"/>
        <end position="763"/>
    </location>
</feature>
<feature type="compositionally biased region" description="Low complexity" evidence="2">
    <location>
        <begin position="791"/>
        <end position="830"/>
    </location>
</feature>
<feature type="compositionally biased region" description="Low complexity" evidence="2">
    <location>
        <begin position="847"/>
        <end position="871"/>
    </location>
</feature>
<feature type="compositionally biased region" description="Gly residues" evidence="2">
    <location>
        <begin position="872"/>
        <end position="882"/>
    </location>
</feature>
<feature type="splice variant" id="VSP_016611" description="In isoform d." evidence="6">
    <location>
        <begin position="359"/>
        <end position="742"/>
    </location>
</feature>
<feature type="splice variant" id="VSP_016612" description="In isoform a." evidence="5">
    <location>
        <begin position="722"/>
        <end position="742"/>
    </location>
</feature>
<feature type="splice variant" id="VSP_016613" description="In isoform c." evidence="6">
    <location>
        <begin position="782"/>
        <end position="817"/>
    </location>
</feature>